<dbReference type="EMBL" id="CP000387">
    <property type="protein sequence ID" value="ABN45406.1"/>
    <property type="molecule type" value="Genomic_DNA"/>
</dbReference>
<dbReference type="RefSeq" id="WP_002893764.1">
    <property type="nucleotide sequence ID" value="NZ_CAXTYR010000002.1"/>
</dbReference>
<dbReference type="RefSeq" id="YP_001035956.1">
    <property type="nucleotide sequence ID" value="NC_009009.1"/>
</dbReference>
<dbReference type="SMR" id="A3CQF1"/>
<dbReference type="STRING" id="388919.SSA_2033"/>
<dbReference type="KEGG" id="ssa:SSA_2033"/>
<dbReference type="PATRIC" id="fig|388919.9.peg.1929"/>
<dbReference type="eggNOG" id="COG0103">
    <property type="taxonomic scope" value="Bacteria"/>
</dbReference>
<dbReference type="HOGENOM" id="CLU_046483_2_1_9"/>
<dbReference type="OrthoDB" id="9803965at2"/>
<dbReference type="PRO" id="PR:A3CQF1"/>
<dbReference type="Proteomes" id="UP000002148">
    <property type="component" value="Chromosome"/>
</dbReference>
<dbReference type="GO" id="GO:0022627">
    <property type="term" value="C:cytosolic small ribosomal subunit"/>
    <property type="evidence" value="ECO:0007669"/>
    <property type="project" value="TreeGrafter"/>
</dbReference>
<dbReference type="GO" id="GO:0003723">
    <property type="term" value="F:RNA binding"/>
    <property type="evidence" value="ECO:0007669"/>
    <property type="project" value="TreeGrafter"/>
</dbReference>
<dbReference type="GO" id="GO:0003735">
    <property type="term" value="F:structural constituent of ribosome"/>
    <property type="evidence" value="ECO:0007669"/>
    <property type="project" value="InterPro"/>
</dbReference>
<dbReference type="GO" id="GO:0006412">
    <property type="term" value="P:translation"/>
    <property type="evidence" value="ECO:0007669"/>
    <property type="project" value="UniProtKB-UniRule"/>
</dbReference>
<dbReference type="FunFam" id="3.30.230.10:FF:000001">
    <property type="entry name" value="30S ribosomal protein S9"/>
    <property type="match status" value="1"/>
</dbReference>
<dbReference type="Gene3D" id="3.30.230.10">
    <property type="match status" value="1"/>
</dbReference>
<dbReference type="HAMAP" id="MF_00532_B">
    <property type="entry name" value="Ribosomal_uS9_B"/>
    <property type="match status" value="1"/>
</dbReference>
<dbReference type="InterPro" id="IPR020568">
    <property type="entry name" value="Ribosomal_Su5_D2-typ_SF"/>
</dbReference>
<dbReference type="InterPro" id="IPR000754">
    <property type="entry name" value="Ribosomal_uS9"/>
</dbReference>
<dbReference type="InterPro" id="IPR023035">
    <property type="entry name" value="Ribosomal_uS9_bac/plastid"/>
</dbReference>
<dbReference type="InterPro" id="IPR020574">
    <property type="entry name" value="Ribosomal_uS9_CS"/>
</dbReference>
<dbReference type="InterPro" id="IPR014721">
    <property type="entry name" value="Ribsml_uS5_D2-typ_fold_subgr"/>
</dbReference>
<dbReference type="NCBIfam" id="NF001099">
    <property type="entry name" value="PRK00132.1"/>
    <property type="match status" value="1"/>
</dbReference>
<dbReference type="PANTHER" id="PTHR21569">
    <property type="entry name" value="RIBOSOMAL PROTEIN S9"/>
    <property type="match status" value="1"/>
</dbReference>
<dbReference type="PANTHER" id="PTHR21569:SF1">
    <property type="entry name" value="SMALL RIBOSOMAL SUBUNIT PROTEIN US9M"/>
    <property type="match status" value="1"/>
</dbReference>
<dbReference type="Pfam" id="PF00380">
    <property type="entry name" value="Ribosomal_S9"/>
    <property type="match status" value="1"/>
</dbReference>
<dbReference type="SUPFAM" id="SSF54211">
    <property type="entry name" value="Ribosomal protein S5 domain 2-like"/>
    <property type="match status" value="1"/>
</dbReference>
<dbReference type="PROSITE" id="PS00360">
    <property type="entry name" value="RIBOSOMAL_S9"/>
    <property type="match status" value="1"/>
</dbReference>
<protein>
    <recommendedName>
        <fullName evidence="1">Small ribosomal subunit protein uS9</fullName>
    </recommendedName>
    <alternativeName>
        <fullName evidence="3">30S ribosomal protein S9</fullName>
    </alternativeName>
</protein>
<keyword id="KW-1185">Reference proteome</keyword>
<keyword id="KW-0687">Ribonucleoprotein</keyword>
<keyword id="KW-0689">Ribosomal protein</keyword>
<evidence type="ECO:0000255" key="1">
    <source>
        <dbReference type="HAMAP-Rule" id="MF_00532"/>
    </source>
</evidence>
<evidence type="ECO:0000256" key="2">
    <source>
        <dbReference type="SAM" id="MobiDB-lite"/>
    </source>
</evidence>
<evidence type="ECO:0000305" key="3"/>
<proteinExistence type="inferred from homology"/>
<name>RS9_STRSV</name>
<feature type="chain" id="PRO_1000051347" description="Small ribosomal subunit protein uS9">
    <location>
        <begin position="1"/>
        <end position="130"/>
    </location>
</feature>
<feature type="region of interest" description="Disordered" evidence="2">
    <location>
        <begin position="107"/>
        <end position="130"/>
    </location>
</feature>
<feature type="compositionally biased region" description="Basic residues" evidence="2">
    <location>
        <begin position="111"/>
        <end position="130"/>
    </location>
</feature>
<accession>A3CQF1</accession>
<organism>
    <name type="scientific">Streptococcus sanguinis (strain SK36)</name>
    <dbReference type="NCBI Taxonomy" id="388919"/>
    <lineage>
        <taxon>Bacteria</taxon>
        <taxon>Bacillati</taxon>
        <taxon>Bacillota</taxon>
        <taxon>Bacilli</taxon>
        <taxon>Lactobacillales</taxon>
        <taxon>Streptococcaceae</taxon>
        <taxon>Streptococcus</taxon>
    </lineage>
</organism>
<comment type="similarity">
    <text evidence="1">Belongs to the universal ribosomal protein uS9 family.</text>
</comment>
<reference key="1">
    <citation type="journal article" date="2007" name="J. Bacteriol.">
        <title>Genome of the opportunistic pathogen Streptococcus sanguinis.</title>
        <authorList>
            <person name="Xu P."/>
            <person name="Alves J.M."/>
            <person name="Kitten T."/>
            <person name="Brown A."/>
            <person name="Chen Z."/>
            <person name="Ozaki L.S."/>
            <person name="Manque P."/>
            <person name="Ge X."/>
            <person name="Serrano M.G."/>
            <person name="Puiu D."/>
            <person name="Hendricks S."/>
            <person name="Wang Y."/>
            <person name="Chaplin M.D."/>
            <person name="Akan D."/>
            <person name="Paik S."/>
            <person name="Peterson D.L."/>
            <person name="Macrina F.L."/>
            <person name="Buck G.A."/>
        </authorList>
    </citation>
    <scope>NUCLEOTIDE SEQUENCE [LARGE SCALE GENOMIC DNA]</scope>
    <source>
        <strain>SK36</strain>
    </source>
</reference>
<gene>
    <name evidence="1" type="primary">rpsI</name>
    <name type="ordered locus">SSA_2033</name>
</gene>
<sequence length="130" mass="14190">MSQAQYAGTGRRKNAVARVRLVPGTGKITVNKKDVEEYIPHADLRLVINQPFAVTSTAGSYDVFVNVVGGGYAGQAGAIRHGIARALLQVDPDFRDSLKRAGLLTRDSRKVERKKPGLKKARKASQFSKR</sequence>